<proteinExistence type="inferred from homology"/>
<evidence type="ECO:0000255" key="1"/>
<evidence type="ECO:0000305" key="2"/>
<gene>
    <name type="primary">yhjO</name>
    <name type="ordered locus">BSU10580</name>
</gene>
<feature type="chain" id="PRO_0000349882" description="Uncharacterized MFS-type transporter YhjO">
    <location>
        <begin position="1"/>
        <end position="401"/>
    </location>
</feature>
<feature type="transmembrane region" description="Helical" evidence="1">
    <location>
        <begin position="20"/>
        <end position="40"/>
    </location>
</feature>
<feature type="transmembrane region" description="Helical" evidence="1">
    <location>
        <begin position="49"/>
        <end position="69"/>
    </location>
</feature>
<feature type="transmembrane region" description="Helical" evidence="1">
    <location>
        <begin position="83"/>
        <end position="100"/>
    </location>
</feature>
<feature type="transmembrane region" description="Helical" evidence="1">
    <location>
        <begin position="104"/>
        <end position="121"/>
    </location>
</feature>
<feature type="transmembrane region" description="Helical" evidence="1">
    <location>
        <begin position="140"/>
        <end position="160"/>
    </location>
</feature>
<feature type="transmembrane region" description="Helical" evidence="1">
    <location>
        <begin position="167"/>
        <end position="187"/>
    </location>
</feature>
<feature type="transmembrane region" description="Helical" evidence="1">
    <location>
        <begin position="207"/>
        <end position="227"/>
    </location>
</feature>
<feature type="transmembrane region" description="Helical" evidence="1">
    <location>
        <begin position="248"/>
        <end position="268"/>
    </location>
</feature>
<feature type="transmembrane region" description="Helical" evidence="1">
    <location>
        <begin position="289"/>
        <end position="309"/>
    </location>
</feature>
<feature type="transmembrane region" description="Helical" evidence="1">
    <location>
        <begin position="357"/>
        <end position="377"/>
    </location>
</feature>
<organism>
    <name type="scientific">Bacillus subtilis (strain 168)</name>
    <dbReference type="NCBI Taxonomy" id="224308"/>
    <lineage>
        <taxon>Bacteria</taxon>
        <taxon>Bacillati</taxon>
        <taxon>Bacillota</taxon>
        <taxon>Bacilli</taxon>
        <taxon>Bacillales</taxon>
        <taxon>Bacillaceae</taxon>
        <taxon>Bacillus</taxon>
    </lineage>
</organism>
<sequence>MLTSFHSIKSRYTAPVRLRFFGELLTSLTGAMMGPFMVLYLHEQLNGSIMMPMLIISLQPFADIFLTLAAGRVTDRLGRRTAILTALLLQSAAMTGFVFAEHAYVFAILYVMNGIGRSLYIPASRAQIAESTPESRRSEVFAVINAIYSTGLTAGPLVGMLLYNHNPVWIFALDAAALFIYFLIAALKLPETKPLHPAVTPKMSASFTIYRPVLLLLLLSLPISMLYAQTETTYRLFSKNMFSDYLSMLTIYSAAKALFSCVLQVPLVKGTEKLSMKTILFITYICYSLAAAGFACSTSLTMLLVTAAVMTVGESIGLTHIQTFISKLAPPHLLGRFYAVYGLHWDISRSIGPLAGGLILTSFGGEVIFYALAVCLLTAGLSLTYTIEKLEHKVIRKVNRL</sequence>
<reference key="1">
    <citation type="journal article" date="1998" name="Microbiology">
        <title>The 172 kb prkA-addAB region from 83 degrees to 97 degrees of the Bacillus subtilis chromosome contains several dysfunctional genes, the glyB marker, many genes encoding transporter proteins, and the ubiquitous hit gene.</title>
        <authorList>
            <person name="Noback M.A."/>
            <person name="Holsappel S."/>
            <person name="Kiewiet R."/>
            <person name="Terpstra P."/>
            <person name="Wambutt R."/>
            <person name="Wedler H."/>
            <person name="Venema G."/>
            <person name="Bron S."/>
        </authorList>
    </citation>
    <scope>NUCLEOTIDE SEQUENCE [GENOMIC DNA]</scope>
    <source>
        <strain>168</strain>
    </source>
</reference>
<reference key="2">
    <citation type="journal article" date="1997" name="Nature">
        <title>The complete genome sequence of the Gram-positive bacterium Bacillus subtilis.</title>
        <authorList>
            <person name="Kunst F."/>
            <person name="Ogasawara N."/>
            <person name="Moszer I."/>
            <person name="Albertini A.M."/>
            <person name="Alloni G."/>
            <person name="Azevedo V."/>
            <person name="Bertero M.G."/>
            <person name="Bessieres P."/>
            <person name="Bolotin A."/>
            <person name="Borchert S."/>
            <person name="Borriss R."/>
            <person name="Boursier L."/>
            <person name="Brans A."/>
            <person name="Braun M."/>
            <person name="Brignell S.C."/>
            <person name="Bron S."/>
            <person name="Brouillet S."/>
            <person name="Bruschi C.V."/>
            <person name="Caldwell B."/>
            <person name="Capuano V."/>
            <person name="Carter N.M."/>
            <person name="Choi S.-K."/>
            <person name="Codani J.-J."/>
            <person name="Connerton I.F."/>
            <person name="Cummings N.J."/>
            <person name="Daniel R.A."/>
            <person name="Denizot F."/>
            <person name="Devine K.M."/>
            <person name="Duesterhoeft A."/>
            <person name="Ehrlich S.D."/>
            <person name="Emmerson P.T."/>
            <person name="Entian K.-D."/>
            <person name="Errington J."/>
            <person name="Fabret C."/>
            <person name="Ferrari E."/>
            <person name="Foulger D."/>
            <person name="Fritz C."/>
            <person name="Fujita M."/>
            <person name="Fujita Y."/>
            <person name="Fuma S."/>
            <person name="Galizzi A."/>
            <person name="Galleron N."/>
            <person name="Ghim S.-Y."/>
            <person name="Glaser P."/>
            <person name="Goffeau A."/>
            <person name="Golightly E.J."/>
            <person name="Grandi G."/>
            <person name="Guiseppi G."/>
            <person name="Guy B.J."/>
            <person name="Haga K."/>
            <person name="Haiech J."/>
            <person name="Harwood C.R."/>
            <person name="Henaut A."/>
            <person name="Hilbert H."/>
            <person name="Holsappel S."/>
            <person name="Hosono S."/>
            <person name="Hullo M.-F."/>
            <person name="Itaya M."/>
            <person name="Jones L.-M."/>
            <person name="Joris B."/>
            <person name="Karamata D."/>
            <person name="Kasahara Y."/>
            <person name="Klaerr-Blanchard M."/>
            <person name="Klein C."/>
            <person name="Kobayashi Y."/>
            <person name="Koetter P."/>
            <person name="Koningstein G."/>
            <person name="Krogh S."/>
            <person name="Kumano M."/>
            <person name="Kurita K."/>
            <person name="Lapidus A."/>
            <person name="Lardinois S."/>
            <person name="Lauber J."/>
            <person name="Lazarevic V."/>
            <person name="Lee S.-M."/>
            <person name="Levine A."/>
            <person name="Liu H."/>
            <person name="Masuda S."/>
            <person name="Mauel C."/>
            <person name="Medigue C."/>
            <person name="Medina N."/>
            <person name="Mellado R.P."/>
            <person name="Mizuno M."/>
            <person name="Moestl D."/>
            <person name="Nakai S."/>
            <person name="Noback M."/>
            <person name="Noone D."/>
            <person name="O'Reilly M."/>
            <person name="Ogawa K."/>
            <person name="Ogiwara A."/>
            <person name="Oudega B."/>
            <person name="Park S.-H."/>
            <person name="Parro V."/>
            <person name="Pohl T.M."/>
            <person name="Portetelle D."/>
            <person name="Porwollik S."/>
            <person name="Prescott A.M."/>
            <person name="Presecan E."/>
            <person name="Pujic P."/>
            <person name="Purnelle B."/>
            <person name="Rapoport G."/>
            <person name="Rey M."/>
            <person name="Reynolds S."/>
            <person name="Rieger M."/>
            <person name="Rivolta C."/>
            <person name="Rocha E."/>
            <person name="Roche B."/>
            <person name="Rose M."/>
            <person name="Sadaie Y."/>
            <person name="Sato T."/>
            <person name="Scanlan E."/>
            <person name="Schleich S."/>
            <person name="Schroeter R."/>
            <person name="Scoffone F."/>
            <person name="Sekiguchi J."/>
            <person name="Sekowska A."/>
            <person name="Seror S.J."/>
            <person name="Serror P."/>
            <person name="Shin B.-S."/>
            <person name="Soldo B."/>
            <person name="Sorokin A."/>
            <person name="Tacconi E."/>
            <person name="Takagi T."/>
            <person name="Takahashi H."/>
            <person name="Takemaru K."/>
            <person name="Takeuchi M."/>
            <person name="Tamakoshi A."/>
            <person name="Tanaka T."/>
            <person name="Terpstra P."/>
            <person name="Tognoni A."/>
            <person name="Tosato V."/>
            <person name="Uchiyama S."/>
            <person name="Vandenbol M."/>
            <person name="Vannier F."/>
            <person name="Vassarotti A."/>
            <person name="Viari A."/>
            <person name="Wambutt R."/>
            <person name="Wedler E."/>
            <person name="Wedler H."/>
            <person name="Weitzenegger T."/>
            <person name="Winters P."/>
            <person name="Wipat A."/>
            <person name="Yamamoto H."/>
            <person name="Yamane K."/>
            <person name="Yasumoto K."/>
            <person name="Yata K."/>
            <person name="Yoshida K."/>
            <person name="Yoshikawa H.-F."/>
            <person name="Zumstein E."/>
            <person name="Yoshikawa H."/>
            <person name="Danchin A."/>
        </authorList>
    </citation>
    <scope>NUCLEOTIDE SEQUENCE [LARGE SCALE GENOMIC DNA]</scope>
    <source>
        <strain>168</strain>
    </source>
</reference>
<name>YHJO_BACSU</name>
<keyword id="KW-1003">Cell membrane</keyword>
<keyword id="KW-0472">Membrane</keyword>
<keyword id="KW-1185">Reference proteome</keyword>
<keyword id="KW-0812">Transmembrane</keyword>
<keyword id="KW-1133">Transmembrane helix</keyword>
<keyword id="KW-0813">Transport</keyword>
<accession>O07569</accession>
<accession>Q796R7</accession>
<comment type="subcellular location">
    <subcellularLocation>
        <location>Cell membrane</location>
        <topology>Multi-pass membrane protein</topology>
    </subcellularLocation>
</comment>
<comment type="similarity">
    <text evidence="2">Belongs to the major facilitator superfamily.</text>
</comment>
<dbReference type="EMBL" id="Y14081">
    <property type="protein sequence ID" value="CAA74477.1"/>
    <property type="molecule type" value="Genomic_DNA"/>
</dbReference>
<dbReference type="EMBL" id="AL009126">
    <property type="protein sequence ID" value="CAB12898.1"/>
    <property type="molecule type" value="Genomic_DNA"/>
</dbReference>
<dbReference type="PIR" id="F69834">
    <property type="entry name" value="F69834"/>
</dbReference>
<dbReference type="RefSeq" id="NP_388939.1">
    <property type="nucleotide sequence ID" value="NC_000964.3"/>
</dbReference>
<dbReference type="RefSeq" id="WP_003245498.1">
    <property type="nucleotide sequence ID" value="NZ_OZ025638.1"/>
</dbReference>
<dbReference type="SMR" id="O07569"/>
<dbReference type="FunCoup" id="O07569">
    <property type="interactions" value="27"/>
</dbReference>
<dbReference type="STRING" id="224308.BSU10580"/>
<dbReference type="PaxDb" id="224308-BSU10580"/>
<dbReference type="EnsemblBacteria" id="CAB12898">
    <property type="protein sequence ID" value="CAB12898"/>
    <property type="gene ID" value="BSU_10580"/>
</dbReference>
<dbReference type="GeneID" id="939780"/>
<dbReference type="KEGG" id="bsu:BSU10580"/>
<dbReference type="PATRIC" id="fig|224308.179.peg.1137"/>
<dbReference type="eggNOG" id="COG0477">
    <property type="taxonomic scope" value="Bacteria"/>
</dbReference>
<dbReference type="eggNOG" id="COG2814">
    <property type="taxonomic scope" value="Bacteria"/>
</dbReference>
<dbReference type="InParanoid" id="O07569"/>
<dbReference type="OrthoDB" id="9793283at2"/>
<dbReference type="PhylomeDB" id="O07569"/>
<dbReference type="BioCyc" id="BSUB:BSU10580-MONOMER"/>
<dbReference type="Proteomes" id="UP000001570">
    <property type="component" value="Chromosome"/>
</dbReference>
<dbReference type="GO" id="GO:0005886">
    <property type="term" value="C:plasma membrane"/>
    <property type="evidence" value="ECO:0007669"/>
    <property type="project" value="UniProtKB-SubCell"/>
</dbReference>
<dbReference type="GO" id="GO:0022857">
    <property type="term" value="F:transmembrane transporter activity"/>
    <property type="evidence" value="ECO:0007669"/>
    <property type="project" value="InterPro"/>
</dbReference>
<dbReference type="CDD" id="cd17329">
    <property type="entry name" value="MFS_MdtH_MDR_like"/>
    <property type="match status" value="1"/>
</dbReference>
<dbReference type="Gene3D" id="1.20.1250.20">
    <property type="entry name" value="MFS general substrate transporter like domains"/>
    <property type="match status" value="1"/>
</dbReference>
<dbReference type="InterPro" id="IPR011701">
    <property type="entry name" value="MFS"/>
</dbReference>
<dbReference type="InterPro" id="IPR020846">
    <property type="entry name" value="MFS_dom"/>
</dbReference>
<dbReference type="InterPro" id="IPR050497">
    <property type="entry name" value="MFS_MdtG_subfamily"/>
</dbReference>
<dbReference type="InterPro" id="IPR036259">
    <property type="entry name" value="MFS_trans_sf"/>
</dbReference>
<dbReference type="PANTHER" id="PTHR43414">
    <property type="entry name" value="MULTIDRUG RESISTANCE PROTEIN MDTG"/>
    <property type="match status" value="1"/>
</dbReference>
<dbReference type="PANTHER" id="PTHR43414:SF1">
    <property type="entry name" value="PEPTIDE PERMEASE"/>
    <property type="match status" value="1"/>
</dbReference>
<dbReference type="Pfam" id="PF07690">
    <property type="entry name" value="MFS_1"/>
    <property type="match status" value="1"/>
</dbReference>
<dbReference type="SUPFAM" id="SSF103473">
    <property type="entry name" value="MFS general substrate transporter"/>
    <property type="match status" value="1"/>
</dbReference>
<dbReference type="PROSITE" id="PS50850">
    <property type="entry name" value="MFS"/>
    <property type="match status" value="1"/>
</dbReference>
<protein>
    <recommendedName>
        <fullName>Uncharacterized MFS-type transporter YhjO</fullName>
    </recommendedName>
</protein>